<feature type="signal peptide" evidence="1">
    <location>
        <begin position="1"/>
        <end position="21"/>
    </location>
</feature>
<feature type="propeptide" id="PRO_1000128935" evidence="1">
    <location>
        <begin position="22"/>
        <end position="63"/>
    </location>
</feature>
<feature type="chain" id="PRO_1000128936" description="Acid shock protein">
    <location>
        <begin position="64"/>
        <end position="121"/>
    </location>
</feature>
<feature type="region of interest" description="Disordered" evidence="2">
    <location>
        <begin position="40"/>
        <end position="121"/>
    </location>
</feature>
<feature type="compositionally biased region" description="Low complexity" evidence="2">
    <location>
        <begin position="74"/>
        <end position="83"/>
    </location>
</feature>
<feature type="compositionally biased region" description="Basic residues" evidence="2">
    <location>
        <begin position="84"/>
        <end position="93"/>
    </location>
</feature>
<feature type="compositionally biased region" description="Low complexity" evidence="2">
    <location>
        <begin position="94"/>
        <end position="103"/>
    </location>
</feature>
<feature type="compositionally biased region" description="Basic residues" evidence="2">
    <location>
        <begin position="104"/>
        <end position="113"/>
    </location>
</feature>
<keyword id="KW-0574">Periplasm</keyword>
<keyword id="KW-0732">Signal</keyword>
<protein>
    <recommendedName>
        <fullName evidence="1">Acid shock protein</fullName>
    </recommendedName>
</protein>
<comment type="function">
    <text evidence="1">Required for growth and/or survival at acidic conditions.</text>
</comment>
<comment type="subcellular location">
    <subcellularLocation>
        <location evidence="1">Periplasm</location>
    </subcellularLocation>
</comment>
<comment type="PTM">
    <text evidence="1">Proteolytic processing gives rise to the active protein.</text>
</comment>
<comment type="similarity">
    <text evidence="1">Belongs to the Asr family.</text>
</comment>
<accession>B2KAB7</accession>
<evidence type="ECO:0000255" key="1">
    <source>
        <dbReference type="HAMAP-Rule" id="MF_00546"/>
    </source>
</evidence>
<evidence type="ECO:0000256" key="2">
    <source>
        <dbReference type="SAM" id="MobiDB-lite"/>
    </source>
</evidence>
<organism>
    <name type="scientific">Yersinia pseudotuberculosis serotype IB (strain PB1/+)</name>
    <dbReference type="NCBI Taxonomy" id="502801"/>
    <lineage>
        <taxon>Bacteria</taxon>
        <taxon>Pseudomonadati</taxon>
        <taxon>Pseudomonadota</taxon>
        <taxon>Gammaproteobacteria</taxon>
        <taxon>Enterobacterales</taxon>
        <taxon>Yersiniaceae</taxon>
        <taxon>Yersinia</taxon>
    </lineage>
</organism>
<reference key="1">
    <citation type="submission" date="2008-04" db="EMBL/GenBank/DDBJ databases">
        <title>Complete sequence of Yersinia pseudotuberculosis PB1/+.</title>
        <authorList>
            <person name="Copeland A."/>
            <person name="Lucas S."/>
            <person name="Lapidus A."/>
            <person name="Glavina del Rio T."/>
            <person name="Dalin E."/>
            <person name="Tice H."/>
            <person name="Bruce D."/>
            <person name="Goodwin L."/>
            <person name="Pitluck S."/>
            <person name="Munk A.C."/>
            <person name="Brettin T."/>
            <person name="Detter J.C."/>
            <person name="Han C."/>
            <person name="Tapia R."/>
            <person name="Schmutz J."/>
            <person name="Larimer F."/>
            <person name="Land M."/>
            <person name="Hauser L."/>
            <person name="Challacombe J.F."/>
            <person name="Green L."/>
            <person name="Lindler L.E."/>
            <person name="Nikolich M.P."/>
            <person name="Richardson P."/>
        </authorList>
    </citation>
    <scope>NUCLEOTIDE SEQUENCE [LARGE SCALE GENOMIC DNA]</scope>
    <source>
        <strain>PB1/+</strain>
    </source>
</reference>
<proteinExistence type="inferred from homology"/>
<gene>
    <name evidence="1" type="primary">asr</name>
    <name type="ordered locus">YPTS_3071</name>
</gene>
<sequence>MKKVLALMVAATLGLSSVAFAADTTATATPAATSTTATVAAQTKATQHQKHKVTKKTTEQKAQAAKKHEKKASVQKAPVQKAQAAKKHVKKASVQKAPVQKAQAAKKHHKTAKKPVAAPAA</sequence>
<name>ASR_YERPB</name>
<dbReference type="EMBL" id="CP001048">
    <property type="protein sequence ID" value="ACC90028.1"/>
    <property type="molecule type" value="Genomic_DNA"/>
</dbReference>
<dbReference type="RefSeq" id="WP_011192847.1">
    <property type="nucleotide sequence ID" value="NZ_CP009780.1"/>
</dbReference>
<dbReference type="GeneID" id="49785034"/>
<dbReference type="KEGG" id="ypb:YPTS_3071"/>
<dbReference type="PATRIC" id="fig|502801.10.peg.2505"/>
<dbReference type="GO" id="GO:0042597">
    <property type="term" value="C:periplasmic space"/>
    <property type="evidence" value="ECO:0007669"/>
    <property type="project" value="UniProtKB-SubCell"/>
</dbReference>
<dbReference type="HAMAP" id="MF_00546">
    <property type="entry name" value="Asr"/>
    <property type="match status" value="1"/>
</dbReference>
<dbReference type="InterPro" id="IPR023497">
    <property type="entry name" value="Acid_shock"/>
</dbReference>
<dbReference type="NCBIfam" id="NF033636">
    <property type="entry name" value="acid_shock_Asr"/>
    <property type="match status" value="1"/>
</dbReference>
<dbReference type="Pfam" id="PF06392">
    <property type="entry name" value="Asr"/>
    <property type="match status" value="1"/>
</dbReference>